<proteinExistence type="inferred from homology"/>
<dbReference type="EC" id="5.3.1.6" evidence="1"/>
<dbReference type="EMBL" id="AP008226">
    <property type="protein sequence ID" value="BAD71122.1"/>
    <property type="molecule type" value="Genomic_DNA"/>
</dbReference>
<dbReference type="RefSeq" id="WP_008632746.1">
    <property type="nucleotide sequence ID" value="NC_006461.1"/>
</dbReference>
<dbReference type="RefSeq" id="YP_144565.1">
    <property type="nucleotide sequence ID" value="NC_006461.1"/>
</dbReference>
<dbReference type="SMR" id="Q5SIR5"/>
<dbReference type="DrugBank" id="DB03745">
    <property type="generic name" value="Arabinose-5-phosphate"/>
</dbReference>
<dbReference type="DrugBank" id="DB02053">
    <property type="generic name" value="Ribose-5-phosphate"/>
</dbReference>
<dbReference type="EnsemblBacteria" id="BAD71122">
    <property type="protein sequence ID" value="BAD71122"/>
    <property type="gene ID" value="BAD71122"/>
</dbReference>
<dbReference type="GeneID" id="3168636"/>
<dbReference type="KEGG" id="ttj:TTHA1299"/>
<dbReference type="PATRIC" id="fig|300852.9.peg.1277"/>
<dbReference type="eggNOG" id="COG0120">
    <property type="taxonomic scope" value="Bacteria"/>
</dbReference>
<dbReference type="HOGENOM" id="CLU_056590_1_0_0"/>
<dbReference type="PhylomeDB" id="Q5SIR5"/>
<dbReference type="UniPathway" id="UPA00115">
    <property type="reaction ID" value="UER00412"/>
</dbReference>
<dbReference type="Proteomes" id="UP000000532">
    <property type="component" value="Chromosome"/>
</dbReference>
<dbReference type="GO" id="GO:0004751">
    <property type="term" value="F:ribose-5-phosphate isomerase activity"/>
    <property type="evidence" value="ECO:0007669"/>
    <property type="project" value="UniProtKB-UniRule"/>
</dbReference>
<dbReference type="GO" id="GO:0009052">
    <property type="term" value="P:pentose-phosphate shunt, non-oxidative branch"/>
    <property type="evidence" value="ECO:0007669"/>
    <property type="project" value="UniProtKB-UniRule"/>
</dbReference>
<dbReference type="CDD" id="cd01398">
    <property type="entry name" value="RPI_A"/>
    <property type="match status" value="1"/>
</dbReference>
<dbReference type="FunFam" id="3.40.50.1360:FF:000001">
    <property type="entry name" value="Ribose-5-phosphate isomerase A"/>
    <property type="match status" value="1"/>
</dbReference>
<dbReference type="Gene3D" id="3.30.70.260">
    <property type="match status" value="1"/>
</dbReference>
<dbReference type="Gene3D" id="3.40.50.1360">
    <property type="match status" value="1"/>
</dbReference>
<dbReference type="HAMAP" id="MF_00170">
    <property type="entry name" value="Rib_5P_isom_A"/>
    <property type="match status" value="1"/>
</dbReference>
<dbReference type="InterPro" id="IPR037171">
    <property type="entry name" value="NagB/RpiA_transferase-like"/>
</dbReference>
<dbReference type="InterPro" id="IPR050262">
    <property type="entry name" value="Ribose-5P_isomerase"/>
</dbReference>
<dbReference type="InterPro" id="IPR020672">
    <property type="entry name" value="Ribose5P_isomerase_typA_subgr"/>
</dbReference>
<dbReference type="InterPro" id="IPR004788">
    <property type="entry name" value="Ribose5P_isomerase_type_A"/>
</dbReference>
<dbReference type="NCBIfam" id="NF001924">
    <property type="entry name" value="PRK00702.1"/>
    <property type="match status" value="1"/>
</dbReference>
<dbReference type="NCBIfam" id="TIGR00021">
    <property type="entry name" value="rpiA"/>
    <property type="match status" value="1"/>
</dbReference>
<dbReference type="PANTHER" id="PTHR43748">
    <property type="entry name" value="RIBOSE-5-PHOSPHATE ISOMERASE 3, CHLOROPLASTIC-RELATED"/>
    <property type="match status" value="1"/>
</dbReference>
<dbReference type="PANTHER" id="PTHR43748:SF3">
    <property type="entry name" value="RIBOSE-5-PHOSPHATE ISOMERASE 3, CHLOROPLASTIC-RELATED"/>
    <property type="match status" value="1"/>
</dbReference>
<dbReference type="Pfam" id="PF06026">
    <property type="entry name" value="Rib_5-P_isom_A"/>
    <property type="match status" value="1"/>
</dbReference>
<dbReference type="SUPFAM" id="SSF75445">
    <property type="entry name" value="D-ribose-5-phosphate isomerase (RpiA), lid domain"/>
    <property type="match status" value="1"/>
</dbReference>
<dbReference type="SUPFAM" id="SSF100950">
    <property type="entry name" value="NagB/RpiA/CoA transferase-like"/>
    <property type="match status" value="1"/>
</dbReference>
<feature type="chain" id="PRO_0000158487" description="Ribose-5-phosphate isomerase A">
    <location>
        <begin position="1"/>
        <end position="227"/>
    </location>
</feature>
<feature type="active site" description="Proton acceptor" evidence="1">
    <location>
        <position position="108"/>
    </location>
</feature>
<feature type="binding site" evidence="1">
    <location>
        <begin position="30"/>
        <end position="33"/>
    </location>
    <ligand>
        <name>substrate</name>
    </ligand>
</feature>
<feature type="binding site" evidence="1">
    <location>
        <begin position="86"/>
        <end position="89"/>
    </location>
    <ligand>
        <name>substrate</name>
    </ligand>
</feature>
<feature type="binding site" evidence="1">
    <location>
        <begin position="99"/>
        <end position="102"/>
    </location>
    <ligand>
        <name>substrate</name>
    </ligand>
</feature>
<feature type="binding site" evidence="1">
    <location>
        <position position="126"/>
    </location>
    <ligand>
        <name>substrate</name>
    </ligand>
</feature>
<reference key="1">
    <citation type="submission" date="2004-11" db="EMBL/GenBank/DDBJ databases">
        <title>Complete genome sequence of Thermus thermophilus HB8.</title>
        <authorList>
            <person name="Masui R."/>
            <person name="Kurokawa K."/>
            <person name="Nakagawa N."/>
            <person name="Tokunaga F."/>
            <person name="Koyama Y."/>
            <person name="Shibata T."/>
            <person name="Oshima T."/>
            <person name="Yokoyama S."/>
            <person name="Yasunaga T."/>
            <person name="Kuramitsu S."/>
        </authorList>
    </citation>
    <scope>NUCLEOTIDE SEQUENCE [LARGE SCALE GENOMIC DNA]</scope>
    <source>
        <strain>ATCC 27634 / DSM 579 / HB8</strain>
    </source>
</reference>
<name>RPIA_THET8</name>
<keyword id="KW-0413">Isomerase</keyword>
<keyword id="KW-1185">Reference proteome</keyword>
<sequence length="227" mass="24067">MERPLESYKKEAAHAAIAYVQDGMVVGLGTGSTARYAVLELARRLREGELKGVVGVPTSRATEELAKREGIPLVDLPPEGVDLAIDGADEIAPGLALIKGMGGALLREKIVERVAKEFIVIADHTKKVPVLGRGPVPVEIVPFGYRATLKAIADLGGEPELRMDGDEFYFTDGGHLIADCRFGPIGDPLGLHRALLEIPGVVETGLFVGMATRALVAGPFGVEELLP</sequence>
<accession>Q5SIR5</accession>
<evidence type="ECO:0000255" key="1">
    <source>
        <dbReference type="HAMAP-Rule" id="MF_00170"/>
    </source>
</evidence>
<protein>
    <recommendedName>
        <fullName evidence="1">Ribose-5-phosphate isomerase A</fullName>
        <ecNumber evidence="1">5.3.1.6</ecNumber>
    </recommendedName>
    <alternativeName>
        <fullName evidence="1">Phosphoriboisomerase A</fullName>
        <shortName evidence="1">PRI</shortName>
    </alternativeName>
</protein>
<gene>
    <name evidence="1" type="primary">rpiA</name>
    <name type="ordered locus">TTHA1299</name>
</gene>
<organism>
    <name type="scientific">Thermus thermophilus (strain ATCC 27634 / DSM 579 / HB8)</name>
    <dbReference type="NCBI Taxonomy" id="300852"/>
    <lineage>
        <taxon>Bacteria</taxon>
        <taxon>Thermotogati</taxon>
        <taxon>Deinococcota</taxon>
        <taxon>Deinococci</taxon>
        <taxon>Thermales</taxon>
        <taxon>Thermaceae</taxon>
        <taxon>Thermus</taxon>
    </lineage>
</organism>
<comment type="function">
    <text evidence="1">Catalyzes the reversible conversion of ribose-5-phosphate to ribulose 5-phosphate.</text>
</comment>
<comment type="catalytic activity">
    <reaction evidence="1">
        <text>aldehydo-D-ribose 5-phosphate = D-ribulose 5-phosphate</text>
        <dbReference type="Rhea" id="RHEA:14657"/>
        <dbReference type="ChEBI" id="CHEBI:58121"/>
        <dbReference type="ChEBI" id="CHEBI:58273"/>
        <dbReference type="EC" id="5.3.1.6"/>
    </reaction>
</comment>
<comment type="pathway">
    <text evidence="1">Carbohydrate degradation; pentose phosphate pathway; D-ribose 5-phosphate from D-ribulose 5-phosphate (non-oxidative stage): step 1/1.</text>
</comment>
<comment type="subunit">
    <text evidence="1">Homodimer.</text>
</comment>
<comment type="similarity">
    <text evidence="1">Belongs to the ribose 5-phosphate isomerase family.</text>
</comment>